<evidence type="ECO:0000255" key="1">
    <source>
        <dbReference type="HAMAP-Rule" id="MF_01018"/>
    </source>
</evidence>
<name>HIS1_SYNWW</name>
<sequence>MYDDYLTIALSKGTLLEPTLEVFKKLKLPGEGINDKSRSMVFTYDNERVKYIMCRPTDVPTYVEQGAADLGIVGKDVIVEQARDVFEMVDLQYGYCRFVVAVPEAIKNITLKDLNYKRAATKFPVIAENFFRSQGLQVEIIKLHGNIELAPLMGLADMIVDLVSTGRTLKENRLVELIKIMDSTTRLICNRVSYRTKHQQIQPLIENMQKLSTGGSA</sequence>
<accession>Q0AW37</accession>
<protein>
    <recommendedName>
        <fullName evidence="1">ATP phosphoribosyltransferase</fullName>
        <shortName evidence="1">ATP-PRT</shortName>
        <shortName evidence="1">ATP-PRTase</shortName>
        <ecNumber evidence="1">2.4.2.17</ecNumber>
    </recommendedName>
</protein>
<feature type="chain" id="PRO_1000063318" description="ATP phosphoribosyltransferase">
    <location>
        <begin position="1"/>
        <end position="217"/>
    </location>
</feature>
<proteinExistence type="inferred from homology"/>
<keyword id="KW-0028">Amino-acid biosynthesis</keyword>
<keyword id="KW-0067">ATP-binding</keyword>
<keyword id="KW-0963">Cytoplasm</keyword>
<keyword id="KW-0328">Glycosyltransferase</keyword>
<keyword id="KW-0368">Histidine biosynthesis</keyword>
<keyword id="KW-0547">Nucleotide-binding</keyword>
<keyword id="KW-1185">Reference proteome</keyword>
<keyword id="KW-0808">Transferase</keyword>
<organism>
    <name type="scientific">Syntrophomonas wolfei subsp. wolfei (strain DSM 2245B / Goettingen)</name>
    <dbReference type="NCBI Taxonomy" id="335541"/>
    <lineage>
        <taxon>Bacteria</taxon>
        <taxon>Bacillati</taxon>
        <taxon>Bacillota</taxon>
        <taxon>Clostridia</taxon>
        <taxon>Eubacteriales</taxon>
        <taxon>Syntrophomonadaceae</taxon>
        <taxon>Syntrophomonas</taxon>
    </lineage>
</organism>
<comment type="function">
    <text evidence="1">Catalyzes the condensation of ATP and 5-phosphoribose 1-diphosphate to form N'-(5'-phosphoribosyl)-ATP (PR-ATP). Has a crucial role in the pathway because the rate of histidine biosynthesis seems to be controlled primarily by regulation of HisG enzymatic activity.</text>
</comment>
<comment type="catalytic activity">
    <reaction evidence="1">
        <text>1-(5-phospho-beta-D-ribosyl)-ATP + diphosphate = 5-phospho-alpha-D-ribose 1-diphosphate + ATP</text>
        <dbReference type="Rhea" id="RHEA:18473"/>
        <dbReference type="ChEBI" id="CHEBI:30616"/>
        <dbReference type="ChEBI" id="CHEBI:33019"/>
        <dbReference type="ChEBI" id="CHEBI:58017"/>
        <dbReference type="ChEBI" id="CHEBI:73183"/>
        <dbReference type="EC" id="2.4.2.17"/>
    </reaction>
</comment>
<comment type="pathway">
    <text evidence="1">Amino-acid biosynthesis; L-histidine biosynthesis; L-histidine from 5-phospho-alpha-D-ribose 1-diphosphate: step 1/9.</text>
</comment>
<comment type="subunit">
    <text evidence="1">Heteromultimer composed of HisG and HisZ subunits.</text>
</comment>
<comment type="subcellular location">
    <subcellularLocation>
        <location evidence="1">Cytoplasm</location>
    </subcellularLocation>
</comment>
<comment type="domain">
    <text>Lacks the C-terminal regulatory region which is replaced by HisZ.</text>
</comment>
<comment type="similarity">
    <text evidence="1">Belongs to the ATP phosphoribosyltransferase family. Short subfamily.</text>
</comment>
<reference key="1">
    <citation type="journal article" date="2010" name="Environ. Microbiol.">
        <title>The genome of Syntrophomonas wolfei: new insights into syntrophic metabolism and biohydrogen production.</title>
        <authorList>
            <person name="Sieber J.R."/>
            <person name="Sims D.R."/>
            <person name="Han C."/>
            <person name="Kim E."/>
            <person name="Lykidis A."/>
            <person name="Lapidus A.L."/>
            <person name="McDonnald E."/>
            <person name="Rohlin L."/>
            <person name="Culley D.E."/>
            <person name="Gunsalus R."/>
            <person name="McInerney M.J."/>
        </authorList>
    </citation>
    <scope>NUCLEOTIDE SEQUENCE [LARGE SCALE GENOMIC DNA]</scope>
    <source>
        <strain>DSM 2245B / Goettingen</strain>
    </source>
</reference>
<dbReference type="EC" id="2.4.2.17" evidence="1"/>
<dbReference type="EMBL" id="CP000448">
    <property type="protein sequence ID" value="ABI69067.1"/>
    <property type="molecule type" value="Genomic_DNA"/>
</dbReference>
<dbReference type="RefSeq" id="WP_011641162.1">
    <property type="nucleotide sequence ID" value="NC_008346.1"/>
</dbReference>
<dbReference type="SMR" id="Q0AW37"/>
<dbReference type="STRING" id="335541.Swol_1769"/>
<dbReference type="KEGG" id="swo:Swol_1769"/>
<dbReference type="eggNOG" id="COG0040">
    <property type="taxonomic scope" value="Bacteria"/>
</dbReference>
<dbReference type="HOGENOM" id="CLU_038115_2_0_9"/>
<dbReference type="OrthoDB" id="9801867at2"/>
<dbReference type="UniPathway" id="UPA00031">
    <property type="reaction ID" value="UER00006"/>
</dbReference>
<dbReference type="Proteomes" id="UP000001968">
    <property type="component" value="Chromosome"/>
</dbReference>
<dbReference type="GO" id="GO:0005737">
    <property type="term" value="C:cytoplasm"/>
    <property type="evidence" value="ECO:0007669"/>
    <property type="project" value="UniProtKB-SubCell"/>
</dbReference>
<dbReference type="GO" id="GO:0005524">
    <property type="term" value="F:ATP binding"/>
    <property type="evidence" value="ECO:0007669"/>
    <property type="project" value="UniProtKB-KW"/>
</dbReference>
<dbReference type="GO" id="GO:0003879">
    <property type="term" value="F:ATP phosphoribosyltransferase activity"/>
    <property type="evidence" value="ECO:0007669"/>
    <property type="project" value="UniProtKB-UniRule"/>
</dbReference>
<dbReference type="GO" id="GO:0000105">
    <property type="term" value="P:L-histidine biosynthetic process"/>
    <property type="evidence" value="ECO:0007669"/>
    <property type="project" value="UniProtKB-UniRule"/>
</dbReference>
<dbReference type="CDD" id="cd13595">
    <property type="entry name" value="PBP2_HisGs"/>
    <property type="match status" value="1"/>
</dbReference>
<dbReference type="FunFam" id="3.40.190.10:FF:000008">
    <property type="entry name" value="ATP phosphoribosyltransferase"/>
    <property type="match status" value="1"/>
</dbReference>
<dbReference type="Gene3D" id="3.40.190.10">
    <property type="entry name" value="Periplasmic binding protein-like II"/>
    <property type="match status" value="2"/>
</dbReference>
<dbReference type="HAMAP" id="MF_01018">
    <property type="entry name" value="HisG_Short"/>
    <property type="match status" value="1"/>
</dbReference>
<dbReference type="InterPro" id="IPR013820">
    <property type="entry name" value="ATP_PRibTrfase_cat"/>
</dbReference>
<dbReference type="InterPro" id="IPR018198">
    <property type="entry name" value="ATP_PRibTrfase_CS"/>
</dbReference>
<dbReference type="InterPro" id="IPR001348">
    <property type="entry name" value="ATP_PRibTrfase_HisG"/>
</dbReference>
<dbReference type="InterPro" id="IPR024893">
    <property type="entry name" value="ATP_PRibTrfase_HisG_short"/>
</dbReference>
<dbReference type="NCBIfam" id="TIGR00070">
    <property type="entry name" value="hisG"/>
    <property type="match status" value="1"/>
</dbReference>
<dbReference type="PANTHER" id="PTHR21403:SF8">
    <property type="entry name" value="ATP PHOSPHORIBOSYLTRANSFERASE"/>
    <property type="match status" value="1"/>
</dbReference>
<dbReference type="PANTHER" id="PTHR21403">
    <property type="entry name" value="ATP PHOSPHORIBOSYLTRANSFERASE ATP-PRTASE"/>
    <property type="match status" value="1"/>
</dbReference>
<dbReference type="Pfam" id="PF01634">
    <property type="entry name" value="HisG"/>
    <property type="match status" value="1"/>
</dbReference>
<dbReference type="SUPFAM" id="SSF53850">
    <property type="entry name" value="Periplasmic binding protein-like II"/>
    <property type="match status" value="1"/>
</dbReference>
<dbReference type="PROSITE" id="PS01316">
    <property type="entry name" value="ATP_P_PHORIBOSYLTR"/>
    <property type="match status" value="1"/>
</dbReference>
<gene>
    <name evidence="1" type="primary">hisG</name>
    <name type="ordered locus">Swol_1769</name>
</gene>